<gene>
    <name type="primary">CA11</name>
</gene>
<comment type="function">
    <text>Does not have a catalytic activity.</text>
</comment>
<comment type="subcellular location">
    <subcellularLocation>
        <location evidence="4">Secreted</location>
    </subcellularLocation>
</comment>
<comment type="similarity">
    <text evidence="4">Belongs to the alpha-carbonic anhydrase family.</text>
</comment>
<dbReference type="EMBL" id="AY075024">
    <property type="protein sequence ID" value="AAL78172.1"/>
    <property type="molecule type" value="mRNA"/>
</dbReference>
<dbReference type="RefSeq" id="NP_001004038.1">
    <property type="nucleotide sequence ID" value="NM_001004038.1"/>
</dbReference>
<dbReference type="SMR" id="Q866X6"/>
<dbReference type="FunCoup" id="Q866X6">
    <property type="interactions" value="189"/>
</dbReference>
<dbReference type="STRING" id="9823.ENSSSCP00000003409"/>
<dbReference type="GlyCosmos" id="Q866X6">
    <property type="glycosylation" value="4 sites, No reported glycans"/>
</dbReference>
<dbReference type="GlyGen" id="Q866X6">
    <property type="glycosylation" value="4 sites"/>
</dbReference>
<dbReference type="PaxDb" id="9823-ENSSSCP00000003409"/>
<dbReference type="GeneID" id="445526"/>
<dbReference type="KEGG" id="ssc:445526"/>
<dbReference type="CTD" id="770"/>
<dbReference type="eggNOG" id="KOG0382">
    <property type="taxonomic scope" value="Eukaryota"/>
</dbReference>
<dbReference type="InParanoid" id="Q866X6"/>
<dbReference type="OrthoDB" id="5978072at2759"/>
<dbReference type="Proteomes" id="UP000008227">
    <property type="component" value="Unplaced"/>
</dbReference>
<dbReference type="Proteomes" id="UP000314985">
    <property type="component" value="Unplaced"/>
</dbReference>
<dbReference type="Proteomes" id="UP000694570">
    <property type="component" value="Unplaced"/>
</dbReference>
<dbReference type="Proteomes" id="UP000694571">
    <property type="component" value="Unplaced"/>
</dbReference>
<dbReference type="Proteomes" id="UP000694720">
    <property type="component" value="Unplaced"/>
</dbReference>
<dbReference type="Proteomes" id="UP000694722">
    <property type="component" value="Unplaced"/>
</dbReference>
<dbReference type="Proteomes" id="UP000694723">
    <property type="component" value="Unplaced"/>
</dbReference>
<dbReference type="Proteomes" id="UP000694724">
    <property type="component" value="Unplaced"/>
</dbReference>
<dbReference type="Proteomes" id="UP000694725">
    <property type="component" value="Unplaced"/>
</dbReference>
<dbReference type="Proteomes" id="UP000694726">
    <property type="component" value="Unplaced"/>
</dbReference>
<dbReference type="Proteomes" id="UP000694727">
    <property type="component" value="Unplaced"/>
</dbReference>
<dbReference type="Proteomes" id="UP000694728">
    <property type="component" value="Unplaced"/>
</dbReference>
<dbReference type="GO" id="GO:0016323">
    <property type="term" value="C:basolateral plasma membrane"/>
    <property type="evidence" value="ECO:0000318"/>
    <property type="project" value="GO_Central"/>
</dbReference>
<dbReference type="GO" id="GO:0005576">
    <property type="term" value="C:extracellular region"/>
    <property type="evidence" value="ECO:0007669"/>
    <property type="project" value="UniProtKB-SubCell"/>
</dbReference>
<dbReference type="GO" id="GO:0016836">
    <property type="term" value="F:hydro-lyase activity"/>
    <property type="evidence" value="ECO:0000318"/>
    <property type="project" value="GO_Central"/>
</dbReference>
<dbReference type="GO" id="GO:0008270">
    <property type="term" value="F:zinc ion binding"/>
    <property type="evidence" value="ECO:0007669"/>
    <property type="project" value="InterPro"/>
</dbReference>
<dbReference type="CDD" id="cd03121">
    <property type="entry name" value="alpha_CARP_X_XI_like"/>
    <property type="match status" value="1"/>
</dbReference>
<dbReference type="FunFam" id="3.10.200.10:FF:000002">
    <property type="entry name" value="Carbonic anhydrase-related protein 10"/>
    <property type="match status" value="1"/>
</dbReference>
<dbReference type="Gene3D" id="3.10.200.10">
    <property type="entry name" value="Alpha carbonic anhydrase"/>
    <property type="match status" value="1"/>
</dbReference>
<dbReference type="InterPro" id="IPR041878">
    <property type="entry name" value="Alpha_CARP_X/XI"/>
</dbReference>
<dbReference type="InterPro" id="IPR001148">
    <property type="entry name" value="CA_dom"/>
</dbReference>
<dbReference type="InterPro" id="IPR036398">
    <property type="entry name" value="CA_dom_sf"/>
</dbReference>
<dbReference type="InterPro" id="IPR023561">
    <property type="entry name" value="Carbonic_anhydrase_a-class"/>
</dbReference>
<dbReference type="PANTHER" id="PTHR18952">
    <property type="entry name" value="CARBONIC ANHYDRASE"/>
    <property type="match status" value="1"/>
</dbReference>
<dbReference type="PANTHER" id="PTHR18952:SF93">
    <property type="entry name" value="CARBONIC ANHYDRASE-RELATED PROTEIN 11"/>
    <property type="match status" value="1"/>
</dbReference>
<dbReference type="Pfam" id="PF00194">
    <property type="entry name" value="Carb_anhydrase"/>
    <property type="match status" value="1"/>
</dbReference>
<dbReference type="SMART" id="SM01057">
    <property type="entry name" value="Carb_anhydrase"/>
    <property type="match status" value="1"/>
</dbReference>
<dbReference type="SUPFAM" id="SSF51069">
    <property type="entry name" value="Carbonic anhydrase"/>
    <property type="match status" value="1"/>
</dbReference>
<dbReference type="PROSITE" id="PS51144">
    <property type="entry name" value="ALPHA_CA_2"/>
    <property type="match status" value="1"/>
</dbReference>
<keyword id="KW-0325">Glycoprotein</keyword>
<keyword id="KW-1185">Reference proteome</keyword>
<keyword id="KW-0964">Secreted</keyword>
<keyword id="KW-0732">Signal</keyword>
<feature type="signal peptide" evidence="1">
    <location>
        <begin position="1"/>
        <end position="23"/>
    </location>
</feature>
<feature type="chain" id="PRO_0000262535" description="Carbonic anhydrase-related protein 11">
    <location>
        <begin position="24"/>
        <end position="331"/>
    </location>
</feature>
<feature type="domain" description="Alpha-carbonic anhydrase" evidence="2">
    <location>
        <begin position="33"/>
        <end position="306"/>
    </location>
</feature>
<feature type="region of interest" description="Disordered" evidence="3">
    <location>
        <begin position="303"/>
        <end position="331"/>
    </location>
</feature>
<feature type="compositionally biased region" description="Basic and acidic residues" evidence="3">
    <location>
        <begin position="322"/>
        <end position="331"/>
    </location>
</feature>
<feature type="glycosylation site" description="N-linked (GlcNAc...) asparagine" evidence="1">
    <location>
        <position position="118"/>
    </location>
</feature>
<feature type="glycosylation site" description="N-linked (GlcNAc...) asparagine" evidence="1">
    <location>
        <position position="170"/>
    </location>
</feature>
<feature type="glycosylation site" description="N-linked (GlcNAc...) asparagine" evidence="1">
    <location>
        <position position="189"/>
    </location>
</feature>
<feature type="glycosylation site" description="N-linked (GlcNAc...) asparagine" evidence="1">
    <location>
        <position position="263"/>
    </location>
</feature>
<sequence>MGGAARLSAPRALVLWAVLGAAAHIGPAPDPEDWWSYKDNLQGNFVPGPPFWGLVNAAWSLCAVGKRQSPVDVELKRVLYDPFLPPLRLSTGGEKLRGTLYNTGRHVSFLPAPRPVVNVSGGPLLYSHRLSELLLLFGAHDGAGSEHQINHQGFSAEVQLIHFNQELYGNLSAASRGPNGLAILSLFVNVSQVAGNSNPFLSRLLNRDTITRISYKNDAYFLQDLSLELLFPESFGFITYQGSLSTPPCSETVTWILIDRALNITSLQMHSLRLLSQNPPSQIFQSLSGNGRPLQPLAHRALRGNRDPRHPERRCRGPNYRLHVDGAPHGR</sequence>
<reference key="1">
    <citation type="submission" date="2002-01" db="EMBL/GenBank/DDBJ databases">
        <title>Molecular identification of carbonic anhydrases (CA) and CA-related (CAR) genes.</title>
        <authorList>
            <person name="Chen Y."/>
            <person name="Huang C.-H."/>
        </authorList>
    </citation>
    <scope>NUCLEOTIDE SEQUENCE [MRNA]</scope>
</reference>
<accession>Q866X6</accession>
<organism>
    <name type="scientific">Sus scrofa</name>
    <name type="common">Pig</name>
    <dbReference type="NCBI Taxonomy" id="9823"/>
    <lineage>
        <taxon>Eukaryota</taxon>
        <taxon>Metazoa</taxon>
        <taxon>Chordata</taxon>
        <taxon>Craniata</taxon>
        <taxon>Vertebrata</taxon>
        <taxon>Euteleostomi</taxon>
        <taxon>Mammalia</taxon>
        <taxon>Eutheria</taxon>
        <taxon>Laurasiatheria</taxon>
        <taxon>Artiodactyla</taxon>
        <taxon>Suina</taxon>
        <taxon>Suidae</taxon>
        <taxon>Sus</taxon>
    </lineage>
</organism>
<evidence type="ECO:0000255" key="1"/>
<evidence type="ECO:0000255" key="2">
    <source>
        <dbReference type="PROSITE-ProRule" id="PRU01134"/>
    </source>
</evidence>
<evidence type="ECO:0000256" key="3">
    <source>
        <dbReference type="SAM" id="MobiDB-lite"/>
    </source>
</evidence>
<evidence type="ECO:0000305" key="4"/>
<name>CAH11_PIG</name>
<protein>
    <recommendedName>
        <fullName>Carbonic anhydrase-related protein 11</fullName>
    </recommendedName>
    <alternativeName>
        <fullName>CA-RP XI</fullName>
        <shortName>CA-XI</shortName>
        <shortName>CARP XI</shortName>
    </alternativeName>
</protein>
<proteinExistence type="evidence at transcript level"/>